<accession>Q89AF7</accession>
<dbReference type="EMBL" id="AE016826">
    <property type="protein sequence ID" value="AAO27058.1"/>
    <property type="molecule type" value="Genomic_DNA"/>
</dbReference>
<dbReference type="RefSeq" id="WP_011091459.1">
    <property type="nucleotide sequence ID" value="NC_004545.1"/>
</dbReference>
<dbReference type="SMR" id="Q89AF7"/>
<dbReference type="STRING" id="224915.bbp_337"/>
<dbReference type="KEGG" id="bab:bbp_337"/>
<dbReference type="eggNOG" id="COG0184">
    <property type="taxonomic scope" value="Bacteria"/>
</dbReference>
<dbReference type="HOGENOM" id="CLU_148518_0_0_6"/>
<dbReference type="OrthoDB" id="9799262at2"/>
<dbReference type="Proteomes" id="UP000000601">
    <property type="component" value="Chromosome"/>
</dbReference>
<dbReference type="GO" id="GO:0022627">
    <property type="term" value="C:cytosolic small ribosomal subunit"/>
    <property type="evidence" value="ECO:0007669"/>
    <property type="project" value="TreeGrafter"/>
</dbReference>
<dbReference type="GO" id="GO:0019843">
    <property type="term" value="F:rRNA binding"/>
    <property type="evidence" value="ECO:0007669"/>
    <property type="project" value="UniProtKB-UniRule"/>
</dbReference>
<dbReference type="GO" id="GO:0003735">
    <property type="term" value="F:structural constituent of ribosome"/>
    <property type="evidence" value="ECO:0007669"/>
    <property type="project" value="InterPro"/>
</dbReference>
<dbReference type="GO" id="GO:0006412">
    <property type="term" value="P:translation"/>
    <property type="evidence" value="ECO:0007669"/>
    <property type="project" value="UniProtKB-UniRule"/>
</dbReference>
<dbReference type="CDD" id="cd00353">
    <property type="entry name" value="Ribosomal_S15p_S13e"/>
    <property type="match status" value="1"/>
</dbReference>
<dbReference type="FunFam" id="1.10.287.10:FF:000002">
    <property type="entry name" value="30S ribosomal protein S15"/>
    <property type="match status" value="1"/>
</dbReference>
<dbReference type="Gene3D" id="6.10.250.3130">
    <property type="match status" value="1"/>
</dbReference>
<dbReference type="Gene3D" id="1.10.287.10">
    <property type="entry name" value="S15/NS1, RNA-binding"/>
    <property type="match status" value="1"/>
</dbReference>
<dbReference type="HAMAP" id="MF_01343_B">
    <property type="entry name" value="Ribosomal_uS15_B"/>
    <property type="match status" value="1"/>
</dbReference>
<dbReference type="InterPro" id="IPR000589">
    <property type="entry name" value="Ribosomal_uS15"/>
</dbReference>
<dbReference type="InterPro" id="IPR005290">
    <property type="entry name" value="Ribosomal_uS15_bac-type"/>
</dbReference>
<dbReference type="InterPro" id="IPR009068">
    <property type="entry name" value="uS15_NS1_RNA-bd_sf"/>
</dbReference>
<dbReference type="NCBIfam" id="TIGR00952">
    <property type="entry name" value="S15_bact"/>
    <property type="match status" value="1"/>
</dbReference>
<dbReference type="PANTHER" id="PTHR23321">
    <property type="entry name" value="RIBOSOMAL PROTEIN S15, BACTERIAL AND ORGANELLAR"/>
    <property type="match status" value="1"/>
</dbReference>
<dbReference type="PANTHER" id="PTHR23321:SF26">
    <property type="entry name" value="SMALL RIBOSOMAL SUBUNIT PROTEIN US15M"/>
    <property type="match status" value="1"/>
</dbReference>
<dbReference type="Pfam" id="PF00312">
    <property type="entry name" value="Ribosomal_S15"/>
    <property type="match status" value="1"/>
</dbReference>
<dbReference type="SMART" id="SM01387">
    <property type="entry name" value="Ribosomal_S15"/>
    <property type="match status" value="1"/>
</dbReference>
<dbReference type="SUPFAM" id="SSF47060">
    <property type="entry name" value="S15/NS1 RNA-binding domain"/>
    <property type="match status" value="1"/>
</dbReference>
<dbReference type="PROSITE" id="PS00362">
    <property type="entry name" value="RIBOSOMAL_S15"/>
    <property type="match status" value="1"/>
</dbReference>
<evidence type="ECO:0000255" key="1">
    <source>
        <dbReference type="HAMAP-Rule" id="MF_01343"/>
    </source>
</evidence>
<evidence type="ECO:0000305" key="2"/>
<sequence length="89" mass="10530">MSENMNIKSKIITQFGVNSKDSGKSEVQIALLTNRINYLQNHFSLHKKDHCSRRGLLNMVSKRRKLLNYLKDENISRYINIINQLKLRR</sequence>
<proteinExistence type="inferred from homology"/>
<name>RS15_BUCBP</name>
<feature type="chain" id="PRO_0000115403" description="Small ribosomal subunit protein uS15">
    <location>
        <begin position="1"/>
        <end position="89"/>
    </location>
</feature>
<comment type="function">
    <text evidence="1">One of the primary rRNA binding proteins, it binds directly to 16S rRNA where it helps nucleate assembly of the platform of the 30S subunit by binding and bridging several RNA helices of the 16S rRNA.</text>
</comment>
<comment type="function">
    <text evidence="1">Forms an intersubunit bridge (bridge B4) with the 23S rRNA of the 50S subunit in the ribosome.</text>
</comment>
<comment type="subunit">
    <text evidence="1">Part of the 30S ribosomal subunit. Forms a bridge to the 50S subunit in the 70S ribosome, contacting the 23S rRNA.</text>
</comment>
<comment type="similarity">
    <text evidence="1">Belongs to the universal ribosomal protein uS15 family.</text>
</comment>
<gene>
    <name evidence="1" type="primary">rpsO</name>
    <name type="ordered locus">bbp_337</name>
</gene>
<keyword id="KW-1185">Reference proteome</keyword>
<keyword id="KW-0687">Ribonucleoprotein</keyword>
<keyword id="KW-0689">Ribosomal protein</keyword>
<keyword id="KW-0694">RNA-binding</keyword>
<keyword id="KW-0699">rRNA-binding</keyword>
<protein>
    <recommendedName>
        <fullName evidence="1">Small ribosomal subunit protein uS15</fullName>
    </recommendedName>
    <alternativeName>
        <fullName evidence="2">30S ribosomal protein S15</fullName>
    </alternativeName>
</protein>
<organism>
    <name type="scientific">Buchnera aphidicola subsp. Baizongia pistaciae (strain Bp)</name>
    <dbReference type="NCBI Taxonomy" id="224915"/>
    <lineage>
        <taxon>Bacteria</taxon>
        <taxon>Pseudomonadati</taxon>
        <taxon>Pseudomonadota</taxon>
        <taxon>Gammaproteobacteria</taxon>
        <taxon>Enterobacterales</taxon>
        <taxon>Erwiniaceae</taxon>
        <taxon>Buchnera</taxon>
    </lineage>
</organism>
<reference key="1">
    <citation type="journal article" date="2003" name="Proc. Natl. Acad. Sci. U.S.A.">
        <title>Reductive genome evolution in Buchnera aphidicola.</title>
        <authorList>
            <person name="van Ham R.C.H.J."/>
            <person name="Kamerbeek J."/>
            <person name="Palacios C."/>
            <person name="Rausell C."/>
            <person name="Abascal F."/>
            <person name="Bastolla U."/>
            <person name="Fernandez J.M."/>
            <person name="Jimenez L."/>
            <person name="Postigo M."/>
            <person name="Silva F.J."/>
            <person name="Tamames J."/>
            <person name="Viguera E."/>
            <person name="Latorre A."/>
            <person name="Valencia A."/>
            <person name="Moran F."/>
            <person name="Moya A."/>
        </authorList>
    </citation>
    <scope>NUCLEOTIDE SEQUENCE [LARGE SCALE GENOMIC DNA]</scope>
    <source>
        <strain>Bp</strain>
    </source>
</reference>